<name>RIMP_RHIE6</name>
<reference key="1">
    <citation type="journal article" date="2010" name="Appl. Environ. Microbiol.">
        <title>Conserved symbiotic plasmid DNA sequences in the multireplicon pangenomic structure of Rhizobium etli.</title>
        <authorList>
            <person name="Gonzalez V."/>
            <person name="Acosta J.L."/>
            <person name="Santamaria R.I."/>
            <person name="Bustos P."/>
            <person name="Fernandez J.L."/>
            <person name="Hernandez Gonzalez I.L."/>
            <person name="Diaz R."/>
            <person name="Flores M."/>
            <person name="Palacios R."/>
            <person name="Mora J."/>
            <person name="Davila G."/>
        </authorList>
    </citation>
    <scope>NUCLEOTIDE SEQUENCE [LARGE SCALE GENOMIC DNA]</scope>
    <source>
        <strain>CIAT 652</strain>
    </source>
</reference>
<sequence length="198" mass="22277">MTNADNELEPRLITETGLDQRLADIIEPVLVGMGFRLIRVRMLNQNGMTMQVMAERNDGTMTVQDCEEVSMAISPVLDVEDPIDKEYHLEVSSPGIDRPMVRKSDFVRWQGHLVKCETSIMIGNRKRFRGKIVEADADGFTLERDQIAYGEEPKVSIPFTALSDAKLILTDDLIRDALRADKLAKAQAANQNEADEQE</sequence>
<dbReference type="EMBL" id="CP001074">
    <property type="protein sequence ID" value="ACE89152.1"/>
    <property type="molecule type" value="Genomic_DNA"/>
</dbReference>
<dbReference type="SMR" id="B3PXE6"/>
<dbReference type="KEGG" id="rec:RHECIAT_CH0000156"/>
<dbReference type="eggNOG" id="COG0779">
    <property type="taxonomic scope" value="Bacteria"/>
</dbReference>
<dbReference type="HOGENOM" id="CLU_070525_0_1_5"/>
<dbReference type="Proteomes" id="UP000008817">
    <property type="component" value="Chromosome"/>
</dbReference>
<dbReference type="GO" id="GO:0005829">
    <property type="term" value="C:cytosol"/>
    <property type="evidence" value="ECO:0007669"/>
    <property type="project" value="TreeGrafter"/>
</dbReference>
<dbReference type="GO" id="GO:0000028">
    <property type="term" value="P:ribosomal small subunit assembly"/>
    <property type="evidence" value="ECO:0007669"/>
    <property type="project" value="TreeGrafter"/>
</dbReference>
<dbReference type="GO" id="GO:0006412">
    <property type="term" value="P:translation"/>
    <property type="evidence" value="ECO:0007669"/>
    <property type="project" value="TreeGrafter"/>
</dbReference>
<dbReference type="CDD" id="cd01734">
    <property type="entry name" value="YlxS_C"/>
    <property type="match status" value="1"/>
</dbReference>
<dbReference type="Gene3D" id="2.30.30.180">
    <property type="entry name" value="Ribosome maturation factor RimP, C-terminal domain"/>
    <property type="match status" value="1"/>
</dbReference>
<dbReference type="Gene3D" id="3.30.300.70">
    <property type="entry name" value="RimP-like superfamily, N-terminal"/>
    <property type="match status" value="1"/>
</dbReference>
<dbReference type="HAMAP" id="MF_01077">
    <property type="entry name" value="RimP"/>
    <property type="match status" value="1"/>
</dbReference>
<dbReference type="InterPro" id="IPR003728">
    <property type="entry name" value="Ribosome_maturation_RimP"/>
</dbReference>
<dbReference type="InterPro" id="IPR028998">
    <property type="entry name" value="RimP_C"/>
</dbReference>
<dbReference type="InterPro" id="IPR036847">
    <property type="entry name" value="RimP_C_sf"/>
</dbReference>
<dbReference type="InterPro" id="IPR028989">
    <property type="entry name" value="RimP_N"/>
</dbReference>
<dbReference type="InterPro" id="IPR035956">
    <property type="entry name" value="RimP_N_sf"/>
</dbReference>
<dbReference type="NCBIfam" id="NF000932">
    <property type="entry name" value="PRK00092.2-5"/>
    <property type="match status" value="1"/>
</dbReference>
<dbReference type="PANTHER" id="PTHR33867">
    <property type="entry name" value="RIBOSOME MATURATION FACTOR RIMP"/>
    <property type="match status" value="1"/>
</dbReference>
<dbReference type="PANTHER" id="PTHR33867:SF1">
    <property type="entry name" value="RIBOSOME MATURATION FACTOR RIMP"/>
    <property type="match status" value="1"/>
</dbReference>
<dbReference type="Pfam" id="PF17384">
    <property type="entry name" value="DUF150_C"/>
    <property type="match status" value="1"/>
</dbReference>
<dbReference type="Pfam" id="PF02576">
    <property type="entry name" value="RimP_N"/>
    <property type="match status" value="1"/>
</dbReference>
<dbReference type="SUPFAM" id="SSF74942">
    <property type="entry name" value="YhbC-like, C-terminal domain"/>
    <property type="match status" value="1"/>
</dbReference>
<dbReference type="SUPFAM" id="SSF75420">
    <property type="entry name" value="YhbC-like, N-terminal domain"/>
    <property type="match status" value="1"/>
</dbReference>
<feature type="chain" id="PRO_0000384744" description="Ribosome maturation factor RimP">
    <location>
        <begin position="1"/>
        <end position="198"/>
    </location>
</feature>
<gene>
    <name evidence="1" type="primary">rimP</name>
    <name type="ordered locus">RHECIAT_CH0000156</name>
</gene>
<proteinExistence type="inferred from homology"/>
<keyword id="KW-0963">Cytoplasm</keyword>
<keyword id="KW-0690">Ribosome biogenesis</keyword>
<accession>B3PXE6</accession>
<organism>
    <name type="scientific">Rhizobium etli (strain CIAT 652)</name>
    <dbReference type="NCBI Taxonomy" id="491916"/>
    <lineage>
        <taxon>Bacteria</taxon>
        <taxon>Pseudomonadati</taxon>
        <taxon>Pseudomonadota</taxon>
        <taxon>Alphaproteobacteria</taxon>
        <taxon>Hyphomicrobiales</taxon>
        <taxon>Rhizobiaceae</taxon>
        <taxon>Rhizobium/Agrobacterium group</taxon>
        <taxon>Rhizobium</taxon>
    </lineage>
</organism>
<evidence type="ECO:0000255" key="1">
    <source>
        <dbReference type="HAMAP-Rule" id="MF_01077"/>
    </source>
</evidence>
<protein>
    <recommendedName>
        <fullName evidence="1">Ribosome maturation factor RimP</fullName>
    </recommendedName>
</protein>
<comment type="function">
    <text evidence="1">Required for maturation of 30S ribosomal subunits.</text>
</comment>
<comment type="subcellular location">
    <subcellularLocation>
        <location evidence="1">Cytoplasm</location>
    </subcellularLocation>
</comment>
<comment type="similarity">
    <text evidence="1">Belongs to the RimP family.</text>
</comment>